<organism>
    <name type="scientific">Aspergillus flavus (strain ATCC 200026 / FGSC A1120 / IAM 13836 / NRRL 3357 / JCM 12722 / SRRC 167)</name>
    <dbReference type="NCBI Taxonomy" id="332952"/>
    <lineage>
        <taxon>Eukaryota</taxon>
        <taxon>Fungi</taxon>
        <taxon>Dikarya</taxon>
        <taxon>Ascomycota</taxon>
        <taxon>Pezizomycotina</taxon>
        <taxon>Eurotiomycetes</taxon>
        <taxon>Eurotiomycetidae</taxon>
        <taxon>Eurotiales</taxon>
        <taxon>Aspergillaceae</taxon>
        <taxon>Aspergillus</taxon>
        <taxon>Aspergillus subgen. Circumdati</taxon>
    </lineage>
</organism>
<name>SLX4_ASPFN</name>
<sequence length="819" mass="89189">MSAAADVIVLSSSPDRIPNGSPVLPAHDPAKLFDLSPPSASPSPVRSPSELFQISTRSRFFELETPSRNKENKTPKEPPVRKVNTTSKAKSASSQDKPKRRGRKPASESQTVLGDSGLAGLAQQSAPKKTAGARKKRVDSEGKRGKATNRTIMGRVAKSGNVQAKPPQEKIMDVSTPNALPPTKPASGVVSLEIDGLQLETAMKRRIDWTPTKDTTARTVESSQQEVAEANPQSFGSLLSEYGFNDISSAQSDVRNLGDDGPTKRRRIELVDSRLFGSSKPASHDIDDKNLTEDSQQKQPEPKQKPKKQTKKFTTLTARVTASYLNNSHEGSDSSSKETTTSRENAATSRTRGSKRKGKATSKPKEPEFIVLSPEAAAKSLENQELIFGTCSQLEREDSPTSLKELQAAISESERYAVAEPSPLSSTLCATPTSRFTTARGLWSVAARDLEGSLIRQTEVVDLVDTPEPAKMTTSTNDSRNEKALEDAATVPPKEPFDLPQSEPPKLKAIPAAKKEPSPAPGLPTIKASDNLKGTTSQHSKPQPKMPNYNGFTDAELSRQVASYGFKPVKNRKAMIDLLQKCWVSKHGKGTTFETQAGSQNTSTEPTPVLTSSEPNTSQKQPRKTATSRKTAAKSKTNPDSNPPPKINSRKTPSSSDATKAPSIQSKPTQPPPIQSLSNVEEIEDSEEETLPSPFRIQNRYTPQPPETRQALPVSKTLYSPSRPKPRTTKSTTNNSATLNQKQPDLADQIFKAMHAQPAGTPSRPSWHEKILMYDPIILEDFATWLNTEGLGLVGEDREVSAAFLRKWCESRGICCCYR</sequence>
<protein>
    <recommendedName>
        <fullName evidence="1">Structure-specific endonuclease subunit slx4</fullName>
    </recommendedName>
</protein>
<dbReference type="EMBL" id="EQ963480">
    <property type="protein sequence ID" value="EED49171.1"/>
    <property type="molecule type" value="Genomic_DNA"/>
</dbReference>
<dbReference type="RefSeq" id="XP_002381072.1">
    <property type="nucleotide sequence ID" value="XM_002381031.1"/>
</dbReference>
<dbReference type="SMR" id="B8NLN6"/>
<dbReference type="STRING" id="332952.B8NLN6"/>
<dbReference type="EnsemblFungi" id="EED49171">
    <property type="protein sequence ID" value="EED49171"/>
    <property type="gene ID" value="AFLA_092520"/>
</dbReference>
<dbReference type="VEuPathDB" id="FungiDB:AFLA_009487"/>
<dbReference type="eggNOG" id="ENOG502S832">
    <property type="taxonomic scope" value="Eukaryota"/>
</dbReference>
<dbReference type="HOGENOM" id="CLU_016773_0_0_1"/>
<dbReference type="OMA" id="SICCLWK"/>
<dbReference type="GO" id="GO:0033557">
    <property type="term" value="C:Slx1-Slx4 complex"/>
    <property type="evidence" value="ECO:0007669"/>
    <property type="project" value="UniProtKB-UniRule"/>
</dbReference>
<dbReference type="GO" id="GO:0017108">
    <property type="term" value="F:5'-flap endonuclease activity"/>
    <property type="evidence" value="ECO:0007669"/>
    <property type="project" value="InterPro"/>
</dbReference>
<dbReference type="GO" id="GO:0006310">
    <property type="term" value="P:DNA recombination"/>
    <property type="evidence" value="ECO:0007669"/>
    <property type="project" value="UniProtKB-UniRule"/>
</dbReference>
<dbReference type="GO" id="GO:0006281">
    <property type="term" value="P:DNA repair"/>
    <property type="evidence" value="ECO:0007669"/>
    <property type="project" value="UniProtKB-UniRule"/>
</dbReference>
<dbReference type="GO" id="GO:0006260">
    <property type="term" value="P:DNA replication"/>
    <property type="evidence" value="ECO:0007669"/>
    <property type="project" value="InterPro"/>
</dbReference>
<dbReference type="CDD" id="cd22999">
    <property type="entry name" value="SAP_SLX4"/>
    <property type="match status" value="1"/>
</dbReference>
<dbReference type="HAMAP" id="MF_03110">
    <property type="entry name" value="Endonuc_su_Slx4"/>
    <property type="match status" value="1"/>
</dbReference>
<dbReference type="InterPro" id="IPR027784">
    <property type="entry name" value="Slx4_ascomycetes"/>
</dbReference>
<dbReference type="InterPro" id="IPR018574">
    <property type="entry name" value="Structure-sp_endonuc_su_Slx4"/>
</dbReference>
<dbReference type="Pfam" id="PF09494">
    <property type="entry name" value="Slx4"/>
    <property type="match status" value="1"/>
</dbReference>
<evidence type="ECO:0000255" key="1">
    <source>
        <dbReference type="HAMAP-Rule" id="MF_03110"/>
    </source>
</evidence>
<evidence type="ECO:0000256" key="2">
    <source>
        <dbReference type="SAM" id="MobiDB-lite"/>
    </source>
</evidence>
<feature type="chain" id="PRO_0000388013" description="Structure-specific endonuclease subunit slx4">
    <location>
        <begin position="1"/>
        <end position="819"/>
    </location>
</feature>
<feature type="region of interest" description="Disordered" evidence="2">
    <location>
        <begin position="1"/>
        <end position="187"/>
    </location>
</feature>
<feature type="region of interest" description="Disordered" evidence="2">
    <location>
        <begin position="208"/>
        <end position="371"/>
    </location>
</feature>
<feature type="region of interest" description="Disordered" evidence="2">
    <location>
        <begin position="467"/>
        <end position="553"/>
    </location>
</feature>
<feature type="region of interest" description="Disordered" evidence="2">
    <location>
        <begin position="591"/>
        <end position="741"/>
    </location>
</feature>
<feature type="compositionally biased region" description="Low complexity" evidence="2">
    <location>
        <begin position="36"/>
        <end position="49"/>
    </location>
</feature>
<feature type="compositionally biased region" description="Basic and acidic residues" evidence="2">
    <location>
        <begin position="59"/>
        <end position="80"/>
    </location>
</feature>
<feature type="compositionally biased region" description="Polar residues" evidence="2">
    <location>
        <begin position="83"/>
        <end position="95"/>
    </location>
</feature>
<feature type="compositionally biased region" description="Polar residues" evidence="2">
    <location>
        <begin position="212"/>
        <end position="237"/>
    </location>
</feature>
<feature type="compositionally biased region" description="Basic and acidic residues" evidence="2">
    <location>
        <begin position="256"/>
        <end position="272"/>
    </location>
</feature>
<feature type="compositionally biased region" description="Basic and acidic residues" evidence="2">
    <location>
        <begin position="282"/>
        <end position="304"/>
    </location>
</feature>
<feature type="compositionally biased region" description="Polar residues" evidence="2">
    <location>
        <begin position="313"/>
        <end position="329"/>
    </location>
</feature>
<feature type="compositionally biased region" description="Polar residues" evidence="2">
    <location>
        <begin position="337"/>
        <end position="351"/>
    </location>
</feature>
<feature type="compositionally biased region" description="Basic residues" evidence="2">
    <location>
        <begin position="352"/>
        <end position="362"/>
    </location>
</feature>
<feature type="compositionally biased region" description="Polar residues" evidence="2">
    <location>
        <begin position="532"/>
        <end position="541"/>
    </location>
</feature>
<feature type="compositionally biased region" description="Polar residues" evidence="2">
    <location>
        <begin position="592"/>
        <end position="620"/>
    </location>
</feature>
<feature type="compositionally biased region" description="Basic residues" evidence="2">
    <location>
        <begin position="621"/>
        <end position="633"/>
    </location>
</feature>
<feature type="compositionally biased region" description="Polar residues" evidence="2">
    <location>
        <begin position="650"/>
        <end position="668"/>
    </location>
</feature>
<feature type="compositionally biased region" description="Acidic residues" evidence="2">
    <location>
        <begin position="681"/>
        <end position="690"/>
    </location>
</feature>
<feature type="compositionally biased region" description="Polar residues" evidence="2">
    <location>
        <begin position="729"/>
        <end position="741"/>
    </location>
</feature>
<keyword id="KW-0227">DNA damage</keyword>
<keyword id="KW-0233">DNA recombination</keyword>
<keyword id="KW-0234">DNA repair</keyword>
<keyword id="KW-0539">Nucleus</keyword>
<keyword id="KW-0597">Phosphoprotein</keyword>
<proteinExistence type="inferred from homology"/>
<gene>
    <name type="primary">slx4</name>
    <name type="ORF">AFLA_092520</name>
</gene>
<reference key="1">
    <citation type="journal article" date="2015" name="Genome Announc.">
        <title>Genome sequence of Aspergillus flavus NRRL 3357, a strain that causes aflatoxin contamination of food and feed.</title>
        <authorList>
            <person name="Nierman W.C."/>
            <person name="Yu J."/>
            <person name="Fedorova-Abrams N.D."/>
            <person name="Losada L."/>
            <person name="Cleveland T.E."/>
            <person name="Bhatnagar D."/>
            <person name="Bennett J.W."/>
            <person name="Dean R."/>
            <person name="Payne G.A."/>
        </authorList>
    </citation>
    <scope>NUCLEOTIDE SEQUENCE [LARGE SCALE GENOMIC DNA]</scope>
    <source>
        <strain>ATCC 200026 / FGSC A1120 / IAM 13836 / NRRL 3357 / JCM 12722 / SRRC 167</strain>
    </source>
</reference>
<accession>B8NLN6</accession>
<comment type="function">
    <text evidence="1">Regulatory subunit of the slx1-slx4 structure-specific endonuclease that resolves DNA secondary structures generated during DNA repair and recombination. Has endonuclease activity towards branched DNA substrates, introducing single-strand cuts in duplex DNA close to junctions with ss-DNA.</text>
</comment>
<comment type="subunit">
    <text evidence="1">Forms a heterodimer with slx1.</text>
</comment>
<comment type="subcellular location">
    <subcellularLocation>
        <location evidence="1">Nucleus</location>
    </subcellularLocation>
</comment>
<comment type="PTM">
    <text evidence="1">Phosphorylated in response to DNA damage.</text>
</comment>
<comment type="similarity">
    <text evidence="1">Belongs to the SLX4 family.</text>
</comment>